<feature type="chain" id="PRO_0000322753" description="LexA repressor">
    <location>
        <begin position="1"/>
        <end position="234"/>
    </location>
</feature>
<feature type="DNA-binding region" description="H-T-H motif" evidence="1">
    <location>
        <begin position="41"/>
        <end position="61"/>
    </location>
</feature>
<feature type="active site" description="For autocatalytic cleavage activity" evidence="1">
    <location>
        <position position="152"/>
    </location>
</feature>
<feature type="active site" description="For autocatalytic cleavage activity" evidence="1">
    <location>
        <position position="189"/>
    </location>
</feature>
<feature type="site" description="Cleavage; by autolysis" evidence="1">
    <location>
        <begin position="117"/>
        <end position="118"/>
    </location>
</feature>
<dbReference type="EC" id="3.4.21.88" evidence="1"/>
<dbReference type="EMBL" id="CP000316">
    <property type="protein sequence ID" value="ABE44868.1"/>
    <property type="molecule type" value="Genomic_DNA"/>
</dbReference>
<dbReference type="RefSeq" id="WP_011483866.1">
    <property type="nucleotide sequence ID" value="NC_007948.1"/>
</dbReference>
<dbReference type="SMR" id="Q129C4"/>
<dbReference type="STRING" id="296591.Bpro_2954"/>
<dbReference type="MEROPS" id="S24.001"/>
<dbReference type="KEGG" id="pol:Bpro_2954"/>
<dbReference type="eggNOG" id="COG1974">
    <property type="taxonomic scope" value="Bacteria"/>
</dbReference>
<dbReference type="HOGENOM" id="CLU_066192_45_3_4"/>
<dbReference type="OrthoDB" id="9802364at2"/>
<dbReference type="Proteomes" id="UP000001983">
    <property type="component" value="Chromosome"/>
</dbReference>
<dbReference type="GO" id="GO:0003677">
    <property type="term" value="F:DNA binding"/>
    <property type="evidence" value="ECO:0007669"/>
    <property type="project" value="UniProtKB-UniRule"/>
</dbReference>
<dbReference type="GO" id="GO:0004252">
    <property type="term" value="F:serine-type endopeptidase activity"/>
    <property type="evidence" value="ECO:0007669"/>
    <property type="project" value="UniProtKB-UniRule"/>
</dbReference>
<dbReference type="GO" id="GO:0006281">
    <property type="term" value="P:DNA repair"/>
    <property type="evidence" value="ECO:0007669"/>
    <property type="project" value="UniProtKB-UniRule"/>
</dbReference>
<dbReference type="GO" id="GO:0006260">
    <property type="term" value="P:DNA replication"/>
    <property type="evidence" value="ECO:0007669"/>
    <property type="project" value="UniProtKB-UniRule"/>
</dbReference>
<dbReference type="GO" id="GO:0045892">
    <property type="term" value="P:negative regulation of DNA-templated transcription"/>
    <property type="evidence" value="ECO:0007669"/>
    <property type="project" value="UniProtKB-UniRule"/>
</dbReference>
<dbReference type="GO" id="GO:0006508">
    <property type="term" value="P:proteolysis"/>
    <property type="evidence" value="ECO:0007669"/>
    <property type="project" value="InterPro"/>
</dbReference>
<dbReference type="GO" id="GO:0009432">
    <property type="term" value="P:SOS response"/>
    <property type="evidence" value="ECO:0007669"/>
    <property type="project" value="UniProtKB-UniRule"/>
</dbReference>
<dbReference type="CDD" id="cd06529">
    <property type="entry name" value="S24_LexA-like"/>
    <property type="match status" value="1"/>
</dbReference>
<dbReference type="FunFam" id="1.10.10.10:FF:000009">
    <property type="entry name" value="LexA repressor"/>
    <property type="match status" value="1"/>
</dbReference>
<dbReference type="FunFam" id="2.10.109.10:FF:000001">
    <property type="entry name" value="LexA repressor"/>
    <property type="match status" value="1"/>
</dbReference>
<dbReference type="Gene3D" id="2.10.109.10">
    <property type="entry name" value="Umud Fragment, subunit A"/>
    <property type="match status" value="1"/>
</dbReference>
<dbReference type="Gene3D" id="1.10.10.10">
    <property type="entry name" value="Winged helix-like DNA-binding domain superfamily/Winged helix DNA-binding domain"/>
    <property type="match status" value="1"/>
</dbReference>
<dbReference type="HAMAP" id="MF_00015">
    <property type="entry name" value="LexA"/>
    <property type="match status" value="1"/>
</dbReference>
<dbReference type="InterPro" id="IPR006200">
    <property type="entry name" value="LexA"/>
</dbReference>
<dbReference type="InterPro" id="IPR039418">
    <property type="entry name" value="LexA-like"/>
</dbReference>
<dbReference type="InterPro" id="IPR036286">
    <property type="entry name" value="LexA/Signal_pep-like_sf"/>
</dbReference>
<dbReference type="InterPro" id="IPR006199">
    <property type="entry name" value="LexA_DNA-bd_dom"/>
</dbReference>
<dbReference type="InterPro" id="IPR050077">
    <property type="entry name" value="LexA_repressor"/>
</dbReference>
<dbReference type="InterPro" id="IPR006197">
    <property type="entry name" value="Peptidase_S24_LexA"/>
</dbReference>
<dbReference type="InterPro" id="IPR015927">
    <property type="entry name" value="Peptidase_S24_S26A/B/C"/>
</dbReference>
<dbReference type="InterPro" id="IPR036388">
    <property type="entry name" value="WH-like_DNA-bd_sf"/>
</dbReference>
<dbReference type="InterPro" id="IPR036390">
    <property type="entry name" value="WH_DNA-bd_sf"/>
</dbReference>
<dbReference type="NCBIfam" id="TIGR00498">
    <property type="entry name" value="lexA"/>
    <property type="match status" value="1"/>
</dbReference>
<dbReference type="PANTHER" id="PTHR33516">
    <property type="entry name" value="LEXA REPRESSOR"/>
    <property type="match status" value="1"/>
</dbReference>
<dbReference type="PANTHER" id="PTHR33516:SF2">
    <property type="entry name" value="LEXA REPRESSOR-RELATED"/>
    <property type="match status" value="1"/>
</dbReference>
<dbReference type="Pfam" id="PF01726">
    <property type="entry name" value="LexA_DNA_bind"/>
    <property type="match status" value="1"/>
</dbReference>
<dbReference type="Pfam" id="PF00717">
    <property type="entry name" value="Peptidase_S24"/>
    <property type="match status" value="1"/>
</dbReference>
<dbReference type="PRINTS" id="PR00726">
    <property type="entry name" value="LEXASERPTASE"/>
</dbReference>
<dbReference type="SUPFAM" id="SSF51306">
    <property type="entry name" value="LexA/Signal peptidase"/>
    <property type="match status" value="1"/>
</dbReference>
<dbReference type="SUPFAM" id="SSF46785">
    <property type="entry name" value="Winged helix' DNA-binding domain"/>
    <property type="match status" value="1"/>
</dbReference>
<organism>
    <name type="scientific">Polaromonas sp. (strain JS666 / ATCC BAA-500)</name>
    <dbReference type="NCBI Taxonomy" id="296591"/>
    <lineage>
        <taxon>Bacteria</taxon>
        <taxon>Pseudomonadati</taxon>
        <taxon>Pseudomonadota</taxon>
        <taxon>Betaproteobacteria</taxon>
        <taxon>Burkholderiales</taxon>
        <taxon>Comamonadaceae</taxon>
        <taxon>Polaromonas</taxon>
    </lineage>
</organism>
<accession>Q129C4</accession>
<proteinExistence type="inferred from homology"/>
<protein>
    <recommendedName>
        <fullName evidence="1">LexA repressor</fullName>
        <ecNumber evidence="1">3.4.21.88</ecNumber>
    </recommendedName>
</protein>
<keyword id="KW-0068">Autocatalytic cleavage</keyword>
<keyword id="KW-0227">DNA damage</keyword>
<keyword id="KW-0234">DNA repair</keyword>
<keyword id="KW-0235">DNA replication</keyword>
<keyword id="KW-0238">DNA-binding</keyword>
<keyword id="KW-0378">Hydrolase</keyword>
<keyword id="KW-1185">Reference proteome</keyword>
<keyword id="KW-0678">Repressor</keyword>
<keyword id="KW-0742">SOS response</keyword>
<keyword id="KW-0804">Transcription</keyword>
<keyword id="KW-0805">Transcription regulation</keyword>
<reference key="1">
    <citation type="journal article" date="2008" name="Appl. Environ. Microbiol.">
        <title>The genome of Polaromonas sp. strain JS666: insights into the evolution of a hydrocarbon- and xenobiotic-degrading bacterium, and features of relevance to biotechnology.</title>
        <authorList>
            <person name="Mattes T.E."/>
            <person name="Alexander A.K."/>
            <person name="Richardson P.M."/>
            <person name="Munk A.C."/>
            <person name="Han C.S."/>
            <person name="Stothard P."/>
            <person name="Coleman N.V."/>
        </authorList>
    </citation>
    <scope>NUCLEOTIDE SEQUENCE [LARGE SCALE GENOMIC DNA]</scope>
    <source>
        <strain>JS666 / ATCC BAA-500</strain>
    </source>
</reference>
<gene>
    <name evidence="1" type="primary">lexA</name>
    <name type="ordered locus">Bpro_2954</name>
</gene>
<name>LEXA_POLSJ</name>
<sequence length="234" mass="25883">MSILNDFSHLSSEGPKLTARQQQILELIQSAITRTGAPPTRAEIANELGFKSANAAEEHLQALARKGVIELVSGTSRGIRLRSDTLRSIHESRVKQFSLPLQSLAQLALPLVGRVAAGSPILAQEHIEQTYYFESSLFQRQPDYLLKVRGMSMRDAGIIDGDLLAVKQAKEARNGQIVVARIGDEVTVKRFRRTKHLIELLPENPDFKTIVVEPGEPFELEGLAVGLIRNTMLI</sequence>
<evidence type="ECO:0000255" key="1">
    <source>
        <dbReference type="HAMAP-Rule" id="MF_00015"/>
    </source>
</evidence>
<comment type="function">
    <text evidence="1">Represses a number of genes involved in the response to DNA damage (SOS response), including recA and lexA. In the presence of single-stranded DNA, RecA interacts with LexA causing an autocatalytic cleavage which disrupts the DNA-binding part of LexA, leading to derepression of the SOS regulon and eventually DNA repair.</text>
</comment>
<comment type="catalytic activity">
    <reaction evidence="1">
        <text>Hydrolysis of Ala-|-Gly bond in repressor LexA.</text>
        <dbReference type="EC" id="3.4.21.88"/>
    </reaction>
</comment>
<comment type="subunit">
    <text evidence="1">Homodimer.</text>
</comment>
<comment type="similarity">
    <text evidence="1">Belongs to the peptidase S24 family.</text>
</comment>